<organismHost>
    <name type="scientific">Gadus morhua</name>
    <name type="common">Atlantic cod</name>
    <dbReference type="NCBI Taxonomy" id="8049"/>
</organismHost>
<organismHost>
    <name type="scientific">Oncorhynchus kisutch</name>
    <name type="common">Coho salmon</name>
    <name type="synonym">Salmo kisutch</name>
    <dbReference type="NCBI Taxonomy" id="8019"/>
</organismHost>
<organismHost>
    <name type="scientific">Oncorhynchus mykiss</name>
    <name type="common">Rainbow trout</name>
    <name type="synonym">Salmo gairdneri</name>
    <dbReference type="NCBI Taxonomy" id="8022"/>
</organismHost>
<organismHost>
    <name type="scientific">Pollachius virens</name>
    <name type="common">Saithe</name>
    <name type="synonym">Gadus virens</name>
    <dbReference type="NCBI Taxonomy" id="8060"/>
</organismHost>
<organismHost>
    <name type="scientific">Salmo salar</name>
    <name type="common">Atlantic salmon</name>
    <dbReference type="NCBI Taxonomy" id="8030"/>
</organismHost>
<organismHost>
    <name type="scientific">Salmo trutta</name>
    <name type="common">Brown trout</name>
    <dbReference type="NCBI Taxonomy" id="8032"/>
</organismHost>
<dbReference type="EC" id="3.1.1.53"/>
<dbReference type="EMBL" id="AF404342">
    <property type="protein sequence ID" value="AAL67958.1"/>
    <property type="molecule type" value="Genomic_RNA"/>
</dbReference>
<dbReference type="SMR" id="Q8V3U0"/>
<dbReference type="GlyCosmos" id="Q8V3U0">
    <property type="glycosylation" value="1 site, No reported glycans"/>
</dbReference>
<dbReference type="KEGG" id="vg:71004592"/>
<dbReference type="Proteomes" id="UP000008772">
    <property type="component" value="Genome"/>
</dbReference>
<dbReference type="GO" id="GO:0033644">
    <property type="term" value="C:host cell membrane"/>
    <property type="evidence" value="ECO:0007669"/>
    <property type="project" value="UniProtKB-SubCell"/>
</dbReference>
<dbReference type="GO" id="GO:0016020">
    <property type="term" value="C:membrane"/>
    <property type="evidence" value="ECO:0007669"/>
    <property type="project" value="UniProtKB-KW"/>
</dbReference>
<dbReference type="GO" id="GO:0055036">
    <property type="term" value="C:virion membrane"/>
    <property type="evidence" value="ECO:0007669"/>
    <property type="project" value="UniProtKB-SubCell"/>
</dbReference>
<dbReference type="GO" id="GO:0106331">
    <property type="term" value="F:sialate 4-O-acetylesterase activity"/>
    <property type="evidence" value="ECO:0007669"/>
    <property type="project" value="RHEA"/>
</dbReference>
<dbReference type="GO" id="GO:0106330">
    <property type="term" value="F:sialate 9-O-acetylesterase activity"/>
    <property type="evidence" value="ECO:0007669"/>
    <property type="project" value="RHEA"/>
</dbReference>
<dbReference type="GO" id="GO:0039654">
    <property type="term" value="P:fusion of virus membrane with host endosome membrane"/>
    <property type="evidence" value="ECO:0007669"/>
    <property type="project" value="UniProtKB-KW"/>
</dbReference>
<dbReference type="GO" id="GO:0046718">
    <property type="term" value="P:symbiont entry into host cell"/>
    <property type="evidence" value="ECO:0007669"/>
    <property type="project" value="UniProtKB-KW"/>
</dbReference>
<dbReference type="GO" id="GO:0019062">
    <property type="term" value="P:virion attachment to host cell"/>
    <property type="evidence" value="ECO:0007669"/>
    <property type="project" value="UniProtKB-KW"/>
</dbReference>
<dbReference type="InterPro" id="IPR010408">
    <property type="entry name" value="Hemagglutn-estrase_ISAV-type"/>
</dbReference>
<dbReference type="Pfam" id="PF06215">
    <property type="entry name" value="ISAV_HA"/>
    <property type="match status" value="1"/>
</dbReference>
<gene>
    <name evidence="7" type="primary">Segment-6</name>
</gene>
<protein>
    <recommendedName>
        <fullName evidence="6">Hemagglutinin-esterase</fullName>
        <shortName>HE</shortName>
        <ecNumber>3.1.1.53</ecNumber>
    </recommendedName>
    <alternativeName>
        <fullName>gp42</fullName>
    </alternativeName>
</protein>
<evidence type="ECO:0000255" key="1"/>
<evidence type="ECO:0000269" key="2">
    <source>
    </source>
</evidence>
<evidence type="ECO:0000269" key="3">
    <source>
    </source>
</evidence>
<evidence type="ECO:0000269" key="4">
    <source>
    </source>
</evidence>
<evidence type="ECO:0000269" key="5">
    <source>
    </source>
</evidence>
<evidence type="ECO:0000303" key="6">
    <source>
    </source>
</evidence>
<evidence type="ECO:0000303" key="7">
    <source>
    </source>
</evidence>
<evidence type="ECO:0000303" key="8">
    <source>
    </source>
</evidence>
<evidence type="ECO:0000305" key="9">
    <source>
    </source>
</evidence>
<evidence type="ECO:0000305" key="10">
    <source>
    </source>
</evidence>
<accession>Q8V3U0</accession>
<sequence>MARFIILFLLLAPVYSRLCLRNHPDTTWIGDSRSDQSRVNQQSLDLVTNFKGILQAKNGNGLMKQMSGRFPSDWYQPTTKYRILYIGTNDCTEGPNDVIIPTSMTLDNVARDLYLGACRGDVRVTPTFVGAAELGLIGRTDALTEFSVKVLTFNNPTIVVVGLNGMSGIYKVCIAASSGNVGGVNLVNGCGYFSAPLRFDNFKGQIYVSDTFEVRGTKNKCVILRSSSNAPLCTHIKRNIELDEYVDTPNTGGVYPSDGFDSLHGSASIRTFLTEALTCPGVDWDRIDAASCEYDSCPKLVKEFDQTGLGNTDTQIMRELEAQKEMIGKLGRNITDVNNRVDAIPPQLSNIFISMGVAGFGIALFLAGWKACVWIAAFMYKSRGRNPPANLSVA</sequence>
<comment type="function">
    <text evidence="2 4 5">Performs attachment to host receptor thereby inducing virus particle entry into target cell. Binds specifically to 5-N-acetyl-4-O-acetyl neuraminic acid on host cells, which plays a major role in cell tropism of the virus (PubMed:14990724, PubMed:22811536). ALso mediates de-O-acetylation of N-acetyl-4-O-acetylneuraminic acid (PubMed:14990724). This receptor-destroying activity is important for virus release as it probably helps preventing self-aggregation and ensures the efficient spread of the progeny virus from cell to cell (PubMed:14990724). The highly polymorphic region (HPR) modulates the virulence in host (PubMed:24486627). Catalyzes the removal of terminal sialic acid residues from viral and cellular glycoconjugates (PubMed:14990724).</text>
</comment>
<comment type="catalytic activity">
    <reaction evidence="2">
        <text>N-acetyl-9-O-acetylneuraminate + H2O = N-acetylneuraminate + acetate + H(+)</text>
        <dbReference type="Rhea" id="RHEA:22600"/>
        <dbReference type="ChEBI" id="CHEBI:15377"/>
        <dbReference type="ChEBI" id="CHEBI:15378"/>
        <dbReference type="ChEBI" id="CHEBI:28999"/>
        <dbReference type="ChEBI" id="CHEBI:30089"/>
        <dbReference type="ChEBI" id="CHEBI:35418"/>
        <dbReference type="EC" id="3.1.1.53"/>
    </reaction>
</comment>
<comment type="catalytic activity">
    <reaction evidence="2">
        <text>N-acetyl-4-O-acetylneuraminate + H2O = N-acetylneuraminate + acetate + H(+)</text>
        <dbReference type="Rhea" id="RHEA:25564"/>
        <dbReference type="ChEBI" id="CHEBI:15377"/>
        <dbReference type="ChEBI" id="CHEBI:15378"/>
        <dbReference type="ChEBI" id="CHEBI:29006"/>
        <dbReference type="ChEBI" id="CHEBI:30089"/>
        <dbReference type="ChEBI" id="CHEBI:35418"/>
        <dbReference type="EC" id="3.1.1.53"/>
    </reaction>
</comment>
<comment type="subcellular location">
    <subcellularLocation>
        <location evidence="9">Host membrane</location>
    </subcellularLocation>
    <subcellularLocation>
        <location evidence="3 9">Virion membrane</location>
        <topology evidence="1">Single-pass type I membrane protein</topology>
    </subcellularLocation>
</comment>
<keyword id="KW-1170">Fusion of virus membrane with host endosomal membrane</keyword>
<keyword id="KW-1168">Fusion of virus membrane with host membrane</keyword>
<keyword id="KW-0325">Glycoprotein</keyword>
<keyword id="KW-1043">Host membrane</keyword>
<keyword id="KW-0945">Host-virus interaction</keyword>
<keyword id="KW-0378">Hydrolase</keyword>
<keyword id="KW-0472">Membrane</keyword>
<keyword id="KW-1185">Reference proteome</keyword>
<keyword id="KW-0732">Signal</keyword>
<keyword id="KW-0812">Transmembrane</keyword>
<keyword id="KW-1133">Transmembrane helix</keyword>
<keyword id="KW-1161">Viral attachment to host cell</keyword>
<keyword id="KW-1162">Viral penetration into host cytoplasm</keyword>
<keyword id="KW-0946">Virion</keyword>
<keyword id="KW-1160">Virus entry into host cell</keyword>
<name>HEMA_ISAV8</name>
<reference key="1">
    <citation type="journal article" date="2002" name="J. Gen. Virol.">
        <title>Genomic organization of infectious salmon anaemia virus.</title>
        <authorList>
            <person name="Clouthier S.C."/>
            <person name="Rector T."/>
            <person name="Brown N.E."/>
            <person name="Anderson E.D."/>
        </authorList>
    </citation>
    <scope>NUCLEOTIDE SEQUENCE [GENOMIC RNA]</scope>
</reference>
<reference key="2">
    <citation type="journal article" date="2004" name="J. Virol.">
        <title>Infectious salmon anemia virus specifically binds to and hydrolyzes 4-O-acetylated sialic acids.</title>
        <authorList>
            <person name="Hellebo A."/>
            <person name="Vilas U."/>
            <person name="Falk K."/>
            <person name="Vlasak R."/>
        </authorList>
    </citation>
    <scope>FUNCTION</scope>
</reference>
<reference key="3">
    <citation type="journal article" date="2004" name="J. Virol.">
        <title>Identification and characterization of viral structural proteins of infectious salmon anemia virus.</title>
        <authorList>
            <person name="Falk K."/>
            <person name="Aspehaug V."/>
            <person name="Vlasak R."/>
            <person name="Endresen C."/>
        </authorList>
    </citation>
    <scope>SUBCELLULAR LOCATION</scope>
</reference>
<reference key="4">
    <citation type="journal article" date="2005" name="Arch. Virol.">
        <title>Expression, antigenicity and studies on cell receptor binding of the hemagglutinin of infectious salmon anemia virus.</title>
        <authorList>
            <person name="Mikalsen A.B."/>
            <person name="Sindre H."/>
            <person name="Mjaaland S."/>
            <person name="Rimstad E."/>
        </authorList>
    </citation>
    <scope>SUBCELLULAR LOCATION</scope>
</reference>
<reference key="5">
    <citation type="journal article" date="2010" name="Virus Res.">
        <title>Structural and functional analysis of the hemagglutinin-esterase of infectious salmon anaemia virus.</title>
        <authorList>
            <person name="Mueller A."/>
            <person name="Markussen T."/>
            <person name="Drabloes F."/>
            <person name="Gjoeen T."/>
            <person name="Joergensen T.O."/>
            <person name="Solem S.T."/>
            <person name="Mjaaland S."/>
        </authorList>
    </citation>
    <scope>ACTIVE SITE</scope>
</reference>
<reference key="6">
    <citation type="journal article" date="2011" name="Virus Res.">
        <title>Infectious salmon anemia virus--genetics and pathogenesis.</title>
        <authorList>
            <person name="Cottet L."/>
            <person name="Rivas-Aravena A."/>
            <person name="Cortez-San Martin M."/>
            <person name="Sandino A.M."/>
            <person name="Spencer E."/>
        </authorList>
    </citation>
    <scope>REVIEW</scope>
</reference>
<reference key="7">
    <citation type="journal article" date="2012" name="J. Virol.">
        <title>Expression of the infectious salmon anemia virus receptor on atlantic salmon endothelial cells correlates with the cell tropism of the virus.</title>
        <authorList>
            <person name="Aamelfot M."/>
            <person name="Dale O.B."/>
            <person name="Weli S.C."/>
            <person name="Koppang E.O."/>
            <person name="Falk K."/>
        </authorList>
    </citation>
    <scope>FUNCTION</scope>
</reference>
<reference key="8">
    <citation type="journal article" date="2014" name="J. Gen. Virol.">
        <title>Deletions in the highly polymorphic region (HPR) of infectious salmon anaemia virus HPR0 haemagglutinin-esterase enhance viral fusion and influence the interaction with the fusion protein.</title>
        <authorList>
            <person name="Fourrier M."/>
            <person name="Lester K."/>
            <person name="Thoen E."/>
            <person name="Mikalsen A."/>
            <person name="Evensen O."/>
            <person name="Falk K."/>
            <person name="Collet B."/>
            <person name="McBeath A."/>
        </authorList>
    </citation>
    <scope>FUNCTION</scope>
</reference>
<proteinExistence type="inferred from homology"/>
<organism>
    <name type="scientific">Infectious salmon anemia virus (isolate Atlantic salmon/Norway/810/9/99)</name>
    <name type="common">ISAV</name>
    <dbReference type="NCBI Taxonomy" id="652965"/>
    <lineage>
        <taxon>Viruses</taxon>
        <taxon>Riboviria</taxon>
        <taxon>Orthornavirae</taxon>
        <taxon>Negarnaviricota</taxon>
        <taxon>Polyploviricotina</taxon>
        <taxon>Insthoviricetes</taxon>
        <taxon>Articulavirales</taxon>
        <taxon>Orthomyxoviridae</taxon>
        <taxon>Isavirus</taxon>
        <taxon>Isavirus salaris</taxon>
    </lineage>
</organism>
<feature type="signal peptide" evidence="1">
    <location>
        <begin position="1"/>
        <end position="16"/>
    </location>
</feature>
<feature type="chain" id="PRO_0000403914" description="Hemagglutinin-esterase">
    <location>
        <begin position="17"/>
        <end position="394"/>
    </location>
</feature>
<feature type="topological domain" description="Extracellular" evidence="1">
    <location>
        <begin position="17"/>
        <end position="347"/>
    </location>
</feature>
<feature type="transmembrane region" description="Helical" evidence="1">
    <location>
        <begin position="348"/>
        <end position="368"/>
    </location>
</feature>
<feature type="topological domain" description="Cytoplasmic" evidence="1">
    <location>
        <begin position="369"/>
        <end position="394"/>
    </location>
</feature>
<feature type="region of interest" description="Highly polymorphic region" evidence="8">
    <location>
        <begin position="335"/>
        <end position="358"/>
    </location>
</feature>
<feature type="short sequence motif" description="Cell attachment site" evidence="1">
    <location>
        <begin position="119"/>
        <end position="121"/>
    </location>
</feature>
<feature type="active site" evidence="10">
    <location>
        <position position="32"/>
    </location>
</feature>
<feature type="active site" evidence="10">
    <location>
        <position position="261"/>
    </location>
</feature>
<feature type="active site" evidence="10">
    <location>
        <position position="264"/>
    </location>
</feature>
<feature type="glycosylation site" description="N-linked (GlcNAc...) asparagine; by host" evidence="1">
    <location>
        <position position="333"/>
    </location>
</feature>